<name>NAGZ_SHESM</name>
<reference key="1">
    <citation type="submission" date="2006-08" db="EMBL/GenBank/DDBJ databases">
        <title>Complete sequence of Shewanella sp. MR-4.</title>
        <authorList>
            <consortium name="US DOE Joint Genome Institute"/>
            <person name="Copeland A."/>
            <person name="Lucas S."/>
            <person name="Lapidus A."/>
            <person name="Barry K."/>
            <person name="Detter J.C."/>
            <person name="Glavina del Rio T."/>
            <person name="Hammon N."/>
            <person name="Israni S."/>
            <person name="Dalin E."/>
            <person name="Tice H."/>
            <person name="Pitluck S."/>
            <person name="Kiss H."/>
            <person name="Brettin T."/>
            <person name="Bruce D."/>
            <person name="Han C."/>
            <person name="Tapia R."/>
            <person name="Gilna P."/>
            <person name="Schmutz J."/>
            <person name="Larimer F."/>
            <person name="Land M."/>
            <person name="Hauser L."/>
            <person name="Kyrpides N."/>
            <person name="Mikhailova N."/>
            <person name="Nealson K."/>
            <person name="Konstantinidis K."/>
            <person name="Klappenbach J."/>
            <person name="Tiedje J."/>
            <person name="Richardson P."/>
        </authorList>
    </citation>
    <scope>NUCLEOTIDE SEQUENCE [LARGE SCALE GENOMIC DNA]</scope>
    <source>
        <strain>MR-4</strain>
    </source>
</reference>
<proteinExistence type="inferred from homology"/>
<organism>
    <name type="scientific">Shewanella sp. (strain MR-4)</name>
    <dbReference type="NCBI Taxonomy" id="60480"/>
    <lineage>
        <taxon>Bacteria</taxon>
        <taxon>Pseudomonadati</taxon>
        <taxon>Pseudomonadota</taxon>
        <taxon>Gammaproteobacteria</taxon>
        <taxon>Alteromonadales</taxon>
        <taxon>Shewanellaceae</taxon>
        <taxon>Shewanella</taxon>
    </lineage>
</organism>
<protein>
    <recommendedName>
        <fullName evidence="1">Beta-hexosaminidase</fullName>
        <ecNumber evidence="1">3.2.1.52</ecNumber>
    </recommendedName>
    <alternativeName>
        <fullName evidence="1">Beta-N-acetylhexosaminidase</fullName>
    </alternativeName>
    <alternativeName>
        <fullName evidence="1">N-acetyl-beta-glucosaminidase</fullName>
    </alternativeName>
</protein>
<keyword id="KW-0131">Cell cycle</keyword>
<keyword id="KW-0132">Cell division</keyword>
<keyword id="KW-0133">Cell shape</keyword>
<keyword id="KW-0961">Cell wall biogenesis/degradation</keyword>
<keyword id="KW-0963">Cytoplasm</keyword>
<keyword id="KW-0326">Glycosidase</keyword>
<keyword id="KW-0378">Hydrolase</keyword>
<keyword id="KW-0573">Peptidoglycan synthesis</keyword>
<dbReference type="EC" id="3.2.1.52" evidence="1"/>
<dbReference type="EMBL" id="CP000446">
    <property type="protein sequence ID" value="ABI38800.1"/>
    <property type="molecule type" value="Genomic_DNA"/>
</dbReference>
<dbReference type="RefSeq" id="WP_011622500.1">
    <property type="nucleotide sequence ID" value="NC_008321.1"/>
</dbReference>
<dbReference type="SMR" id="Q0HJG7"/>
<dbReference type="CAZy" id="GH3">
    <property type="family name" value="Glycoside Hydrolase Family 3"/>
</dbReference>
<dbReference type="KEGG" id="she:Shewmr4_1726"/>
<dbReference type="HOGENOM" id="CLU_008392_0_0_6"/>
<dbReference type="UniPathway" id="UPA00544"/>
<dbReference type="GO" id="GO:0005737">
    <property type="term" value="C:cytoplasm"/>
    <property type="evidence" value="ECO:0007669"/>
    <property type="project" value="UniProtKB-SubCell"/>
</dbReference>
<dbReference type="GO" id="GO:0004563">
    <property type="term" value="F:beta-N-acetylhexosaminidase activity"/>
    <property type="evidence" value="ECO:0007669"/>
    <property type="project" value="UniProtKB-UniRule"/>
</dbReference>
<dbReference type="GO" id="GO:0005975">
    <property type="term" value="P:carbohydrate metabolic process"/>
    <property type="evidence" value="ECO:0007669"/>
    <property type="project" value="InterPro"/>
</dbReference>
<dbReference type="GO" id="GO:0051301">
    <property type="term" value="P:cell division"/>
    <property type="evidence" value="ECO:0007669"/>
    <property type="project" value="UniProtKB-KW"/>
</dbReference>
<dbReference type="GO" id="GO:0071555">
    <property type="term" value="P:cell wall organization"/>
    <property type="evidence" value="ECO:0007669"/>
    <property type="project" value="UniProtKB-KW"/>
</dbReference>
<dbReference type="GO" id="GO:0009252">
    <property type="term" value="P:peptidoglycan biosynthetic process"/>
    <property type="evidence" value="ECO:0007669"/>
    <property type="project" value="UniProtKB-KW"/>
</dbReference>
<dbReference type="GO" id="GO:0009254">
    <property type="term" value="P:peptidoglycan turnover"/>
    <property type="evidence" value="ECO:0007669"/>
    <property type="project" value="UniProtKB-UniRule"/>
</dbReference>
<dbReference type="GO" id="GO:0008360">
    <property type="term" value="P:regulation of cell shape"/>
    <property type="evidence" value="ECO:0007669"/>
    <property type="project" value="UniProtKB-KW"/>
</dbReference>
<dbReference type="FunFam" id="3.20.20.300:FF:000001">
    <property type="entry name" value="Beta-hexosaminidase"/>
    <property type="match status" value="1"/>
</dbReference>
<dbReference type="Gene3D" id="3.20.20.300">
    <property type="entry name" value="Glycoside hydrolase, family 3, N-terminal domain"/>
    <property type="match status" value="1"/>
</dbReference>
<dbReference type="HAMAP" id="MF_00364">
    <property type="entry name" value="NagZ"/>
    <property type="match status" value="1"/>
</dbReference>
<dbReference type="InterPro" id="IPR022956">
    <property type="entry name" value="Beta_hexosaminidase_bac"/>
</dbReference>
<dbReference type="InterPro" id="IPR019800">
    <property type="entry name" value="Glyco_hydro_3_AS"/>
</dbReference>
<dbReference type="InterPro" id="IPR001764">
    <property type="entry name" value="Glyco_hydro_3_N"/>
</dbReference>
<dbReference type="InterPro" id="IPR036962">
    <property type="entry name" value="Glyco_hydro_3_N_sf"/>
</dbReference>
<dbReference type="InterPro" id="IPR017853">
    <property type="entry name" value="Glycoside_hydrolase_SF"/>
</dbReference>
<dbReference type="InterPro" id="IPR050226">
    <property type="entry name" value="NagZ_Beta-hexosaminidase"/>
</dbReference>
<dbReference type="NCBIfam" id="NF003740">
    <property type="entry name" value="PRK05337.1"/>
    <property type="match status" value="1"/>
</dbReference>
<dbReference type="PANTHER" id="PTHR30480:SF13">
    <property type="entry name" value="BETA-HEXOSAMINIDASE"/>
    <property type="match status" value="1"/>
</dbReference>
<dbReference type="PANTHER" id="PTHR30480">
    <property type="entry name" value="BETA-HEXOSAMINIDASE-RELATED"/>
    <property type="match status" value="1"/>
</dbReference>
<dbReference type="Pfam" id="PF00933">
    <property type="entry name" value="Glyco_hydro_3"/>
    <property type="match status" value="1"/>
</dbReference>
<dbReference type="SUPFAM" id="SSF51445">
    <property type="entry name" value="(Trans)glycosidases"/>
    <property type="match status" value="1"/>
</dbReference>
<dbReference type="PROSITE" id="PS00775">
    <property type="entry name" value="GLYCOSYL_HYDROL_F3"/>
    <property type="match status" value="1"/>
</dbReference>
<evidence type="ECO:0000255" key="1">
    <source>
        <dbReference type="HAMAP-Rule" id="MF_00364"/>
    </source>
</evidence>
<comment type="function">
    <text evidence="1">Plays a role in peptidoglycan recycling by cleaving the terminal beta-1,4-linked N-acetylglucosamine (GlcNAc) from peptide-linked peptidoglycan fragments, giving rise to free GlcNAc, anhydro-N-acetylmuramic acid and anhydro-N-acetylmuramic acid-linked peptides.</text>
</comment>
<comment type="catalytic activity">
    <reaction evidence="1">
        <text>Hydrolysis of terminal non-reducing N-acetyl-D-hexosamine residues in N-acetyl-beta-D-hexosaminides.</text>
        <dbReference type="EC" id="3.2.1.52"/>
    </reaction>
</comment>
<comment type="pathway">
    <text evidence="1">Cell wall biogenesis; peptidoglycan recycling.</text>
</comment>
<comment type="subcellular location">
    <subcellularLocation>
        <location evidence="1">Cytoplasm</location>
    </subcellularLocation>
</comment>
<comment type="similarity">
    <text evidence="1">Belongs to the glycosyl hydrolase 3 family. NagZ subfamily.</text>
</comment>
<accession>Q0HJG7</accession>
<gene>
    <name evidence="1" type="primary">nagZ</name>
    <name type="ordered locus">Shewmr4_1726</name>
</gene>
<sequence length="342" mass="36984">MSYLMLDLLSLDVSEAEAEMLRHPQVGGLILFSRNFSSREQLIALVQQIRQIRPEILIAVDHEGGRVQRFREGFTLIPAMGDILPAAKGDMVLAKRWACELGFLMAIELLACDIDLSFAPVLDLNGISQVIGKRSFSAKPDEVIALAQSFIEGMAEAGMGAVGKHFPGHGSVAADSHIAQPIDEREAEAIFNQDILPFKELIAKGKLSGIMPAHVIYPKVDPNPAGFSSYWLKQILRKELGFNGVIFSDDLGMKGAAFAGDYLGRAQAALDAGCDMILVCNDNPGVMSLLNGFVWPAAAPQHPASLLKPNAAQTAIALENASRWENAKQLAEQIQLAQQAKV</sequence>
<feature type="chain" id="PRO_1000005663" description="Beta-hexosaminidase">
    <location>
        <begin position="1"/>
        <end position="342"/>
    </location>
</feature>
<feature type="active site" description="Proton donor/acceptor" evidence="1">
    <location>
        <position position="177"/>
    </location>
</feature>
<feature type="active site" description="Nucleophile" evidence="1">
    <location>
        <position position="249"/>
    </location>
</feature>
<feature type="binding site" evidence="1">
    <location>
        <position position="61"/>
    </location>
    <ligand>
        <name>substrate</name>
    </ligand>
</feature>
<feature type="binding site" evidence="1">
    <location>
        <position position="69"/>
    </location>
    <ligand>
        <name>substrate</name>
    </ligand>
</feature>
<feature type="binding site" evidence="1">
    <location>
        <position position="134"/>
    </location>
    <ligand>
        <name>substrate</name>
    </ligand>
</feature>
<feature type="binding site" evidence="1">
    <location>
        <begin position="164"/>
        <end position="165"/>
    </location>
    <ligand>
        <name>substrate</name>
    </ligand>
</feature>
<feature type="site" description="Important for catalytic activity" evidence="1">
    <location>
        <position position="175"/>
    </location>
</feature>